<reference key="1">
    <citation type="journal article" date="1995" name="Eur. J. Biochem.">
        <title>Complete amino acid sequence of a zinc metalloendoprotease from Streptomyces caespitosus.</title>
        <authorList>
            <person name="Harada S."/>
            <person name="Kinoshita T."/>
            <person name="Kasai N."/>
            <person name="Tsunasawa S."/>
            <person name="Sakiyama F."/>
        </authorList>
    </citation>
    <scope>PROTEIN SEQUENCE</scope>
</reference>
<reference key="2">
    <citation type="journal article" date="1997" name="J. Biochem.">
        <title>Structure of the zinc endoprotease from Streptomyces caespitosus.</title>
        <authorList>
            <person name="Kurisu G."/>
            <person name="Kinoshita T."/>
            <person name="Sugimoto A."/>
            <person name="Nagara A."/>
            <person name="Kai Y."/>
            <person name="Kasai N."/>
            <person name="Harada S."/>
        </authorList>
    </citation>
    <scope>X-RAY CRYSTALLOGRAPHY (1.60 ANGSTROMS) IN COMPLEX WITH CALCIUM AND ZINC</scope>
    <scope>COFACTOR</scope>
    <scope>DISULFIDE BONDS</scope>
</reference>
<accession>P56406</accession>
<evidence type="ECO:0000269" key="1">
    <source>
    </source>
</evidence>
<evidence type="ECO:0000269" key="2">
    <source>
    </source>
</evidence>
<evidence type="ECO:0000305" key="3"/>
<evidence type="ECO:0000305" key="4">
    <source>
    </source>
</evidence>
<evidence type="ECO:0007829" key="5">
    <source>
        <dbReference type="PDB" id="1C7K"/>
    </source>
</evidence>
<dbReference type="EC" id="3.4.24.77"/>
<dbReference type="PIR" id="S63978">
    <property type="entry name" value="S63978"/>
</dbReference>
<dbReference type="PDB" id="1C7K">
    <property type="method" value="X-ray"/>
    <property type="resolution" value="1.00 A"/>
    <property type="chains" value="A=1-132"/>
</dbReference>
<dbReference type="PDB" id="1KUH">
    <property type="method" value="X-ray"/>
    <property type="resolution" value="1.60 A"/>
    <property type="chains" value="A=1-132"/>
</dbReference>
<dbReference type="PDB" id="4HX3">
    <property type="method" value="X-ray"/>
    <property type="resolution" value="2.70 A"/>
    <property type="chains" value="A/C/E/G/I/K=2-132"/>
</dbReference>
<dbReference type="PDBsum" id="1C7K"/>
<dbReference type="PDBsum" id="1KUH"/>
<dbReference type="PDBsum" id="4HX3"/>
<dbReference type="SMR" id="P56406"/>
<dbReference type="MEROPS" id="M07.001"/>
<dbReference type="EvolutionaryTrace" id="P56406"/>
<dbReference type="GO" id="GO:0005576">
    <property type="term" value="C:extracellular region"/>
    <property type="evidence" value="ECO:0007669"/>
    <property type="project" value="UniProtKB-SubCell"/>
</dbReference>
<dbReference type="GO" id="GO:0004222">
    <property type="term" value="F:metalloendopeptidase activity"/>
    <property type="evidence" value="ECO:0007669"/>
    <property type="project" value="InterPro"/>
</dbReference>
<dbReference type="GO" id="GO:0008270">
    <property type="term" value="F:zinc ion binding"/>
    <property type="evidence" value="ECO:0007669"/>
    <property type="project" value="InterPro"/>
</dbReference>
<dbReference type="GO" id="GO:0006508">
    <property type="term" value="P:proteolysis"/>
    <property type="evidence" value="ECO:0007669"/>
    <property type="project" value="UniProtKB-KW"/>
</dbReference>
<dbReference type="Gene3D" id="3.40.390.10">
    <property type="entry name" value="Collagenase (Catalytic Domain)"/>
    <property type="match status" value="1"/>
</dbReference>
<dbReference type="InterPro" id="IPR024079">
    <property type="entry name" value="MetalloPept_cat_dom_sf"/>
</dbReference>
<dbReference type="InterPro" id="IPR000013">
    <property type="entry name" value="Peptidase_M7"/>
</dbReference>
<dbReference type="Pfam" id="PF02031">
    <property type="entry name" value="Peptidase_M7"/>
    <property type="match status" value="1"/>
</dbReference>
<dbReference type="PIRSF" id="PIRSF016573">
    <property type="entry name" value="Peptidase_M7"/>
    <property type="match status" value="1"/>
</dbReference>
<dbReference type="PRINTS" id="PR00787">
    <property type="entry name" value="NEUTRALPTASE"/>
</dbReference>
<dbReference type="SUPFAM" id="SSF55486">
    <property type="entry name" value="Metalloproteases ('zincins'), catalytic domain"/>
    <property type="match status" value="1"/>
</dbReference>
<sequence>TVTVTYDPSNAPSFQQEIANAAQIWNSSVRNVQLRAGGNADFSYYEGNDSRGSYAQTDGHGRGYIFLDYQQNQQYDSTRVTAHETGHVLGLPDHYQGPCSELMSGGGPGPSCTNPYPNAQERSRVNALWANG</sequence>
<name>SNPA_STRCS</name>
<keyword id="KW-0002">3D-structure</keyword>
<keyword id="KW-0106">Calcium</keyword>
<keyword id="KW-0903">Direct protein sequencing</keyword>
<keyword id="KW-1015">Disulfide bond</keyword>
<keyword id="KW-0378">Hydrolase</keyword>
<keyword id="KW-0479">Metal-binding</keyword>
<keyword id="KW-0482">Metalloprotease</keyword>
<keyword id="KW-0645">Protease</keyword>
<keyword id="KW-0964">Secreted</keyword>
<keyword id="KW-0862">Zinc</keyword>
<gene>
    <name type="primary">snpA</name>
</gene>
<organism>
    <name type="scientific">Streptomyces caespitosus</name>
    <dbReference type="NCBI Taxonomy" id="53502"/>
    <lineage>
        <taxon>Bacteria</taxon>
        <taxon>Bacillati</taxon>
        <taxon>Actinomycetota</taxon>
        <taxon>Actinomycetes</taxon>
        <taxon>Kitasatosporales</taxon>
        <taxon>Streptomycetaceae</taxon>
        <taxon>Streptomyces</taxon>
    </lineage>
</organism>
<protein>
    <recommendedName>
        <fullName>Extracellular small neutral protease</fullName>
        <ecNumber>3.4.24.77</ecNumber>
    </recommendedName>
    <alternativeName>
        <fullName>SCNP</fullName>
    </alternativeName>
    <alternativeName>
        <fullName>Snapalysin</fullName>
    </alternativeName>
</protein>
<comment type="function">
    <text>Specifically hydrolyzes the peptide bond at the imino side of aromatic residues.</text>
</comment>
<comment type="catalytic activity">
    <reaction>
        <text>Hydrolyzes proteins with a preference for Tyr or Phe in the P1' position. Has no action on amino-acid p-nitroanilides.</text>
        <dbReference type="EC" id="3.4.24.77"/>
    </reaction>
</comment>
<comment type="cofactor">
    <cofactor evidence="4">
        <name>Ca(2+)</name>
        <dbReference type="ChEBI" id="CHEBI:29108"/>
    </cofactor>
    <text evidence="2">Binds 1 Ca(2+) ion per subunit.</text>
</comment>
<comment type="cofactor">
    <cofactor evidence="4">
        <name>Zn(2+)</name>
        <dbReference type="ChEBI" id="CHEBI:29105"/>
    </cofactor>
    <text evidence="2">Binds 1 zinc ion per subunit.</text>
</comment>
<comment type="subcellular location">
    <subcellularLocation>
        <location>Secreted</location>
    </subcellularLocation>
</comment>
<comment type="similarity">
    <text evidence="3">Belongs to the peptidase M7 family.</text>
</comment>
<proteinExistence type="evidence at protein level"/>
<feature type="chain" id="PRO_0000078176" description="Extracellular small neutral protease">
    <location>
        <begin position="1"/>
        <end position="132"/>
    </location>
</feature>
<feature type="active site">
    <location>
        <position position="84"/>
    </location>
</feature>
<feature type="binding site" evidence="2">
    <location>
        <position position="76"/>
    </location>
    <ligand>
        <name>Ca(2+)</name>
        <dbReference type="ChEBI" id="CHEBI:29108"/>
    </ligand>
</feature>
<feature type="binding site" evidence="2">
    <location>
        <position position="78"/>
    </location>
    <ligand>
        <name>Ca(2+)</name>
        <dbReference type="ChEBI" id="CHEBI:29108"/>
    </ligand>
</feature>
<feature type="binding site" evidence="2">
    <location>
        <position position="83"/>
    </location>
    <ligand>
        <name>Zn(2+)</name>
        <dbReference type="ChEBI" id="CHEBI:29105"/>
        <note>catalytic</note>
    </ligand>
</feature>
<feature type="binding site" evidence="2">
    <location>
        <position position="87"/>
    </location>
    <ligand>
        <name>Zn(2+)</name>
        <dbReference type="ChEBI" id="CHEBI:29105"/>
        <note>catalytic</note>
    </ligand>
</feature>
<feature type="binding site" evidence="2">
    <location>
        <position position="93"/>
    </location>
    <ligand>
        <name>Zn(2+)</name>
        <dbReference type="ChEBI" id="CHEBI:29105"/>
        <note>catalytic</note>
    </ligand>
</feature>
<feature type="disulfide bond" evidence="1 2">
    <location>
        <begin position="99"/>
        <end position="112"/>
    </location>
</feature>
<feature type="strand" evidence="5">
    <location>
        <begin position="2"/>
        <end position="10"/>
    </location>
</feature>
<feature type="helix" evidence="5">
    <location>
        <begin position="12"/>
        <end position="14"/>
    </location>
</feature>
<feature type="helix" evidence="5">
    <location>
        <begin position="15"/>
        <end position="28"/>
    </location>
</feature>
<feature type="strand" evidence="5">
    <location>
        <begin position="30"/>
        <end position="36"/>
    </location>
</feature>
<feature type="strand" evidence="5">
    <location>
        <begin position="41"/>
        <end position="47"/>
    </location>
</feature>
<feature type="strand" evidence="5">
    <location>
        <begin position="54"/>
        <end position="57"/>
    </location>
</feature>
<feature type="strand" evidence="5">
    <location>
        <begin position="59"/>
        <end position="61"/>
    </location>
</feature>
<feature type="strand" evidence="5">
    <location>
        <begin position="63"/>
        <end position="68"/>
    </location>
</feature>
<feature type="helix" evidence="5">
    <location>
        <begin position="69"/>
        <end position="74"/>
    </location>
</feature>
<feature type="helix" evidence="5">
    <location>
        <begin position="77"/>
        <end position="89"/>
    </location>
</feature>
<feature type="helix" evidence="5">
    <location>
        <begin position="102"/>
        <end position="104"/>
    </location>
</feature>
<feature type="turn" evidence="5">
    <location>
        <begin position="105"/>
        <end position="108"/>
    </location>
</feature>
<feature type="helix" evidence="5">
    <location>
        <begin position="119"/>
        <end position="128"/>
    </location>
</feature>
<feature type="turn" evidence="5">
    <location>
        <begin position="129"/>
        <end position="131"/>
    </location>
</feature>